<accession>Q2G993</accession>
<organism>
    <name type="scientific">Novosphingobium aromaticivorans (strain ATCC 700278 / DSM 12444 / CCUG 56034 / CIP 105152 / NBRC 16084 / F199)</name>
    <dbReference type="NCBI Taxonomy" id="279238"/>
    <lineage>
        <taxon>Bacteria</taxon>
        <taxon>Pseudomonadati</taxon>
        <taxon>Pseudomonadota</taxon>
        <taxon>Alphaproteobacteria</taxon>
        <taxon>Sphingomonadales</taxon>
        <taxon>Sphingomonadaceae</taxon>
        <taxon>Novosphingobium</taxon>
    </lineage>
</organism>
<feature type="chain" id="PRO_0000332483" description="UDP-N-acetylenolpyruvoylglucosamine reductase">
    <location>
        <begin position="1"/>
        <end position="297"/>
    </location>
</feature>
<feature type="domain" description="FAD-binding PCMH-type" evidence="1">
    <location>
        <begin position="26"/>
        <end position="191"/>
    </location>
</feature>
<feature type="active site" evidence="1">
    <location>
        <position position="171"/>
    </location>
</feature>
<feature type="active site" description="Proton donor" evidence="1">
    <location>
        <position position="220"/>
    </location>
</feature>
<feature type="active site" evidence="1">
    <location>
        <position position="290"/>
    </location>
</feature>
<keyword id="KW-0131">Cell cycle</keyword>
<keyword id="KW-0132">Cell division</keyword>
<keyword id="KW-0133">Cell shape</keyword>
<keyword id="KW-0961">Cell wall biogenesis/degradation</keyword>
<keyword id="KW-0963">Cytoplasm</keyword>
<keyword id="KW-0274">FAD</keyword>
<keyword id="KW-0285">Flavoprotein</keyword>
<keyword id="KW-0521">NADP</keyword>
<keyword id="KW-0560">Oxidoreductase</keyword>
<keyword id="KW-0573">Peptidoglycan synthesis</keyword>
<keyword id="KW-1185">Reference proteome</keyword>
<comment type="function">
    <text evidence="1">Cell wall formation.</text>
</comment>
<comment type="catalytic activity">
    <reaction evidence="1">
        <text>UDP-N-acetyl-alpha-D-muramate + NADP(+) = UDP-N-acetyl-3-O-(1-carboxyvinyl)-alpha-D-glucosamine + NADPH + H(+)</text>
        <dbReference type="Rhea" id="RHEA:12248"/>
        <dbReference type="ChEBI" id="CHEBI:15378"/>
        <dbReference type="ChEBI" id="CHEBI:57783"/>
        <dbReference type="ChEBI" id="CHEBI:58349"/>
        <dbReference type="ChEBI" id="CHEBI:68483"/>
        <dbReference type="ChEBI" id="CHEBI:70757"/>
        <dbReference type="EC" id="1.3.1.98"/>
    </reaction>
</comment>
<comment type="cofactor">
    <cofactor evidence="1">
        <name>FAD</name>
        <dbReference type="ChEBI" id="CHEBI:57692"/>
    </cofactor>
</comment>
<comment type="pathway">
    <text evidence="1">Cell wall biogenesis; peptidoglycan biosynthesis.</text>
</comment>
<comment type="subcellular location">
    <subcellularLocation>
        <location evidence="1">Cytoplasm</location>
    </subcellularLocation>
</comment>
<comment type="similarity">
    <text evidence="1">Belongs to the MurB family.</text>
</comment>
<sequence length="297" mass="31220">MSNSVPSSVRGKLTPDAPLAPLVWFKSGGTADWLFEPRDVADLQDFLAGLAPEVPVMALGLGSNLIVRDGGVPGVVIRLGKAFAKVAKVDEVTLDCGGGASGILVSSTARDNGIAGLEFLRSIPGTVGGFVRMNGGAYGREVKDVLVDCDVVIRSGEIVTLPLSELGYTYRHSNLTDGSIVVAARFRGHPGNPEAIQAEMDRISAAREASQPLRSKTGGSTFKNPDGGKAWELVDKAGCRGLQIGGAQVSEKHTNFLINTGTATSAEIEGLGEEVRRRVKASSGVDLEWEIKRIGRP</sequence>
<evidence type="ECO:0000255" key="1">
    <source>
        <dbReference type="HAMAP-Rule" id="MF_00037"/>
    </source>
</evidence>
<gene>
    <name evidence="1" type="primary">murB</name>
    <name type="ordered locus">Saro_1135</name>
</gene>
<proteinExistence type="inferred from homology"/>
<dbReference type="EC" id="1.3.1.98" evidence="1"/>
<dbReference type="EMBL" id="CP000248">
    <property type="protein sequence ID" value="ABD25580.1"/>
    <property type="molecule type" value="Genomic_DNA"/>
</dbReference>
<dbReference type="RefSeq" id="WP_011444794.1">
    <property type="nucleotide sequence ID" value="NC_007794.1"/>
</dbReference>
<dbReference type="SMR" id="Q2G993"/>
<dbReference type="STRING" id="279238.Saro_1135"/>
<dbReference type="KEGG" id="nar:Saro_1135"/>
<dbReference type="eggNOG" id="COG0812">
    <property type="taxonomic scope" value="Bacteria"/>
</dbReference>
<dbReference type="HOGENOM" id="CLU_035304_1_0_5"/>
<dbReference type="UniPathway" id="UPA00219"/>
<dbReference type="Proteomes" id="UP000009134">
    <property type="component" value="Chromosome"/>
</dbReference>
<dbReference type="GO" id="GO:0005829">
    <property type="term" value="C:cytosol"/>
    <property type="evidence" value="ECO:0007669"/>
    <property type="project" value="TreeGrafter"/>
</dbReference>
<dbReference type="GO" id="GO:0071949">
    <property type="term" value="F:FAD binding"/>
    <property type="evidence" value="ECO:0007669"/>
    <property type="project" value="InterPro"/>
</dbReference>
<dbReference type="GO" id="GO:0008762">
    <property type="term" value="F:UDP-N-acetylmuramate dehydrogenase activity"/>
    <property type="evidence" value="ECO:0007669"/>
    <property type="project" value="UniProtKB-UniRule"/>
</dbReference>
<dbReference type="GO" id="GO:0051301">
    <property type="term" value="P:cell division"/>
    <property type="evidence" value="ECO:0007669"/>
    <property type="project" value="UniProtKB-KW"/>
</dbReference>
<dbReference type="GO" id="GO:0071555">
    <property type="term" value="P:cell wall organization"/>
    <property type="evidence" value="ECO:0007669"/>
    <property type="project" value="UniProtKB-KW"/>
</dbReference>
<dbReference type="GO" id="GO:0009252">
    <property type="term" value="P:peptidoglycan biosynthetic process"/>
    <property type="evidence" value="ECO:0007669"/>
    <property type="project" value="UniProtKB-UniRule"/>
</dbReference>
<dbReference type="GO" id="GO:0008360">
    <property type="term" value="P:regulation of cell shape"/>
    <property type="evidence" value="ECO:0007669"/>
    <property type="project" value="UniProtKB-KW"/>
</dbReference>
<dbReference type="Gene3D" id="3.30.465.10">
    <property type="match status" value="1"/>
</dbReference>
<dbReference type="Gene3D" id="3.90.78.10">
    <property type="entry name" value="UDP-N-acetylenolpyruvoylglucosamine reductase, C-terminal domain"/>
    <property type="match status" value="1"/>
</dbReference>
<dbReference type="Gene3D" id="3.30.43.10">
    <property type="entry name" value="Uridine Diphospho-n-acetylenolpyruvylglucosamine Reductase, domain 2"/>
    <property type="match status" value="1"/>
</dbReference>
<dbReference type="HAMAP" id="MF_00037">
    <property type="entry name" value="MurB"/>
    <property type="match status" value="1"/>
</dbReference>
<dbReference type="InterPro" id="IPR016166">
    <property type="entry name" value="FAD-bd_PCMH"/>
</dbReference>
<dbReference type="InterPro" id="IPR036318">
    <property type="entry name" value="FAD-bd_PCMH-like_sf"/>
</dbReference>
<dbReference type="InterPro" id="IPR016167">
    <property type="entry name" value="FAD-bd_PCMH_sub1"/>
</dbReference>
<dbReference type="InterPro" id="IPR016169">
    <property type="entry name" value="FAD-bd_PCMH_sub2"/>
</dbReference>
<dbReference type="InterPro" id="IPR003170">
    <property type="entry name" value="MurB"/>
</dbReference>
<dbReference type="InterPro" id="IPR011601">
    <property type="entry name" value="MurB_C"/>
</dbReference>
<dbReference type="InterPro" id="IPR036635">
    <property type="entry name" value="MurB_C_sf"/>
</dbReference>
<dbReference type="InterPro" id="IPR006094">
    <property type="entry name" value="Oxid_FAD_bind_N"/>
</dbReference>
<dbReference type="NCBIfam" id="TIGR00179">
    <property type="entry name" value="murB"/>
    <property type="match status" value="1"/>
</dbReference>
<dbReference type="NCBIfam" id="NF010480">
    <property type="entry name" value="PRK13905.1"/>
    <property type="match status" value="1"/>
</dbReference>
<dbReference type="PANTHER" id="PTHR21071">
    <property type="entry name" value="UDP-N-ACETYLENOLPYRUVOYLGLUCOSAMINE REDUCTASE"/>
    <property type="match status" value="1"/>
</dbReference>
<dbReference type="PANTHER" id="PTHR21071:SF4">
    <property type="entry name" value="UDP-N-ACETYLENOLPYRUVOYLGLUCOSAMINE REDUCTASE"/>
    <property type="match status" value="1"/>
</dbReference>
<dbReference type="Pfam" id="PF01565">
    <property type="entry name" value="FAD_binding_4"/>
    <property type="match status" value="1"/>
</dbReference>
<dbReference type="Pfam" id="PF02873">
    <property type="entry name" value="MurB_C"/>
    <property type="match status" value="1"/>
</dbReference>
<dbReference type="SUPFAM" id="SSF56176">
    <property type="entry name" value="FAD-binding/transporter-associated domain-like"/>
    <property type="match status" value="1"/>
</dbReference>
<dbReference type="SUPFAM" id="SSF56194">
    <property type="entry name" value="Uridine diphospho-N-Acetylenolpyruvylglucosamine reductase, MurB, C-terminal domain"/>
    <property type="match status" value="1"/>
</dbReference>
<dbReference type="PROSITE" id="PS51387">
    <property type="entry name" value="FAD_PCMH"/>
    <property type="match status" value="1"/>
</dbReference>
<reference key="1">
    <citation type="submission" date="2006-01" db="EMBL/GenBank/DDBJ databases">
        <title>Complete sequence of Novosphingobium aromaticivorans DSM 12444.</title>
        <authorList>
            <consortium name="US DOE Joint Genome Institute"/>
            <person name="Copeland A."/>
            <person name="Lucas S."/>
            <person name="Lapidus A."/>
            <person name="Barry K."/>
            <person name="Detter J.C."/>
            <person name="Glavina T."/>
            <person name="Hammon N."/>
            <person name="Israni S."/>
            <person name="Pitluck S."/>
            <person name="Chain P."/>
            <person name="Malfatti S."/>
            <person name="Shin M."/>
            <person name="Vergez L."/>
            <person name="Schmutz J."/>
            <person name="Larimer F."/>
            <person name="Land M."/>
            <person name="Kyrpides N."/>
            <person name="Ivanova N."/>
            <person name="Fredrickson J."/>
            <person name="Balkwill D."/>
            <person name="Romine M.F."/>
            <person name="Richardson P."/>
        </authorList>
    </citation>
    <scope>NUCLEOTIDE SEQUENCE [LARGE SCALE GENOMIC DNA]</scope>
    <source>
        <strain>ATCC 700278 / DSM 12444 / CCUG 56034 / CIP 105152 / NBRC 16084 / F199</strain>
    </source>
</reference>
<protein>
    <recommendedName>
        <fullName evidence="1">UDP-N-acetylenolpyruvoylglucosamine reductase</fullName>
        <ecNumber evidence="1">1.3.1.98</ecNumber>
    </recommendedName>
    <alternativeName>
        <fullName evidence="1">UDP-N-acetylmuramate dehydrogenase</fullName>
    </alternativeName>
</protein>
<name>MURB_NOVAD</name>